<reference key="1">
    <citation type="journal article" date="2007" name="Proc. Natl. Acad. Sci. U.S.A.">
        <title>Genome sequencing reveals complex secondary metabolome in the marine actinomycete Salinispora tropica.</title>
        <authorList>
            <person name="Udwary D.W."/>
            <person name="Zeigler L."/>
            <person name="Asolkar R.N."/>
            <person name="Singan V."/>
            <person name="Lapidus A."/>
            <person name="Fenical W."/>
            <person name="Jensen P.R."/>
            <person name="Moore B.S."/>
        </authorList>
    </citation>
    <scope>NUCLEOTIDE SEQUENCE [LARGE SCALE GENOMIC DNA]</scope>
    <source>
        <strain>ATCC BAA-916 / DSM 44818 / JCM 13857 / NBRC 105044 / CNB-440</strain>
    </source>
</reference>
<organism>
    <name type="scientific">Salinispora tropica (strain ATCC BAA-916 / DSM 44818 / JCM 13857 / NBRC 105044 / CNB-440)</name>
    <dbReference type="NCBI Taxonomy" id="369723"/>
    <lineage>
        <taxon>Bacteria</taxon>
        <taxon>Bacillati</taxon>
        <taxon>Actinomycetota</taxon>
        <taxon>Actinomycetes</taxon>
        <taxon>Micromonosporales</taxon>
        <taxon>Micromonosporaceae</taxon>
        <taxon>Salinispora</taxon>
    </lineage>
</organism>
<gene>
    <name evidence="1" type="primary">atpH</name>
    <name type="ordered locus">Strop_3633</name>
</gene>
<sequence length="274" mass="28753">MQAATSRESYKIAADRLDEYVRGAESSAVATTAEDLLSVADLLRREPRLRRALVDPARSGADRADLLAGILGGKVGGDALDLLTTLVSHRWSAPSELLDGAERLGVAALLAAADKAGDLGEVEDELFRFGQVVAGQSTLSNVLSDPAAPAAQRATLAGELLAGKARPVTVRLVEVALGGFGGRSFVGALTRLVELAADQRDRQVAYVTVAAPLGAEEERRLVASLSAIYGREVTVKQSVNPEVLGGVSVQVGSDLYDGTVLRRLNESRNALAKR</sequence>
<evidence type="ECO:0000255" key="1">
    <source>
        <dbReference type="HAMAP-Rule" id="MF_01416"/>
    </source>
</evidence>
<protein>
    <recommendedName>
        <fullName evidence="1">ATP synthase subunit delta</fullName>
    </recommendedName>
    <alternativeName>
        <fullName evidence="1">ATP synthase F(1) sector subunit delta</fullName>
    </alternativeName>
    <alternativeName>
        <fullName evidence="1">F-type ATPase subunit delta</fullName>
        <shortName evidence="1">F-ATPase subunit delta</shortName>
    </alternativeName>
</protein>
<feature type="chain" id="PRO_1000184787" description="ATP synthase subunit delta">
    <location>
        <begin position="1"/>
        <end position="274"/>
    </location>
</feature>
<proteinExistence type="inferred from homology"/>
<comment type="function">
    <text evidence="1">F(1)F(0) ATP synthase produces ATP from ADP in the presence of a proton or sodium gradient. F-type ATPases consist of two structural domains, F(1) containing the extramembraneous catalytic core and F(0) containing the membrane proton channel, linked together by a central stalk and a peripheral stalk. During catalysis, ATP synthesis in the catalytic domain of F(1) is coupled via a rotary mechanism of the central stalk subunits to proton translocation.</text>
</comment>
<comment type="function">
    <text evidence="1">This protein is part of the stalk that links CF(0) to CF(1). It either transmits conformational changes from CF(0) to CF(1) or is implicated in proton conduction.</text>
</comment>
<comment type="subunit">
    <text evidence="1">F-type ATPases have 2 components, F(1) - the catalytic core - and F(0) - the membrane proton channel. F(1) has five subunits: alpha(3), beta(3), gamma(1), delta(1), epsilon(1). F(0) has three main subunits: a(1), b(2) and c(10-14). The alpha and beta chains form an alternating ring which encloses part of the gamma chain. F(1) is attached to F(0) by a central stalk formed by the gamma and epsilon chains, while a peripheral stalk is formed by the delta and b chains.</text>
</comment>
<comment type="subcellular location">
    <subcellularLocation>
        <location evidence="1">Cell membrane</location>
        <topology evidence="1">Peripheral membrane protein</topology>
    </subcellularLocation>
</comment>
<comment type="similarity">
    <text evidence="1">Belongs to the ATPase delta chain family.</text>
</comment>
<name>ATPD_SALTO</name>
<accession>A4XAW5</accession>
<dbReference type="EMBL" id="CP000667">
    <property type="protein sequence ID" value="ABP56064.1"/>
    <property type="molecule type" value="Genomic_DNA"/>
</dbReference>
<dbReference type="RefSeq" id="WP_012014839.1">
    <property type="nucleotide sequence ID" value="NC_009380.1"/>
</dbReference>
<dbReference type="SMR" id="A4XAW5"/>
<dbReference type="STRING" id="369723.Strop_3633"/>
<dbReference type="KEGG" id="stp:Strop_3633"/>
<dbReference type="PATRIC" id="fig|369723.5.peg.3748"/>
<dbReference type="eggNOG" id="COG0712">
    <property type="taxonomic scope" value="Bacteria"/>
</dbReference>
<dbReference type="HOGENOM" id="CLU_088880_0_0_11"/>
<dbReference type="Proteomes" id="UP000000235">
    <property type="component" value="Chromosome"/>
</dbReference>
<dbReference type="GO" id="GO:0005886">
    <property type="term" value="C:plasma membrane"/>
    <property type="evidence" value="ECO:0007669"/>
    <property type="project" value="UniProtKB-SubCell"/>
</dbReference>
<dbReference type="GO" id="GO:0045259">
    <property type="term" value="C:proton-transporting ATP synthase complex"/>
    <property type="evidence" value="ECO:0007669"/>
    <property type="project" value="UniProtKB-KW"/>
</dbReference>
<dbReference type="GO" id="GO:0046933">
    <property type="term" value="F:proton-transporting ATP synthase activity, rotational mechanism"/>
    <property type="evidence" value="ECO:0007669"/>
    <property type="project" value="UniProtKB-UniRule"/>
</dbReference>
<dbReference type="Gene3D" id="1.10.520.20">
    <property type="entry name" value="N-terminal domain of the delta subunit of the F1F0-ATP synthase"/>
    <property type="match status" value="1"/>
</dbReference>
<dbReference type="HAMAP" id="MF_01416">
    <property type="entry name" value="ATP_synth_delta_bact"/>
    <property type="match status" value="1"/>
</dbReference>
<dbReference type="InterPro" id="IPR026015">
    <property type="entry name" value="ATP_synth_OSCP/delta_N_sf"/>
</dbReference>
<dbReference type="InterPro" id="IPR000711">
    <property type="entry name" value="ATPase_OSCP/dsu"/>
</dbReference>
<dbReference type="NCBIfam" id="NF009967">
    <property type="entry name" value="PRK13430.1"/>
    <property type="match status" value="1"/>
</dbReference>
<dbReference type="PANTHER" id="PTHR11910">
    <property type="entry name" value="ATP SYNTHASE DELTA CHAIN"/>
    <property type="match status" value="1"/>
</dbReference>
<dbReference type="Pfam" id="PF00213">
    <property type="entry name" value="OSCP"/>
    <property type="match status" value="1"/>
</dbReference>
<dbReference type="PRINTS" id="PR00125">
    <property type="entry name" value="ATPASEDELTA"/>
</dbReference>
<keyword id="KW-0066">ATP synthesis</keyword>
<keyword id="KW-1003">Cell membrane</keyword>
<keyword id="KW-0139">CF(1)</keyword>
<keyword id="KW-0375">Hydrogen ion transport</keyword>
<keyword id="KW-0406">Ion transport</keyword>
<keyword id="KW-0472">Membrane</keyword>
<keyword id="KW-1185">Reference proteome</keyword>
<keyword id="KW-0813">Transport</keyword>